<evidence type="ECO:0000255" key="1">
    <source>
        <dbReference type="HAMAP-Rule" id="MF_00021"/>
    </source>
</evidence>
<gene>
    <name evidence="1" type="primary">thiI</name>
    <name type="ordered locus">MGAS10750_Spy0719</name>
</gene>
<sequence>MDYSEIMVRHGELSTKGKNRMRFINKLKNNIQDVLAPFPAITVRSDRDRTHVSLNGTDYQPIVEALKLVFGVQALSPVYKLEKSVPLLVTAVQDIMTSLYRDGLTFKIATKRSDHAFELDSRELNSLLGGAVFEVLPNIQAQMKHPDVTLKVEIRDEAAYISYEEIKGAGGLPVGTSGKGMLMLSGGIDSPVAGYLALKRGLDIEVVHFASPPYTSPGALAKAQDLTRRLTRFGGNIQFIEVPFTEIQEEIKNKAPEAYLMTLTRRFMMRITDAIREQRKGLVIVNGESLGQVASQTLESMQAINAVTSTPIIRPVVTMDKLEIIEMAQAIDTFDISIQPFEDCCTIFAPDRPKTNPKLSNAEKYEERFDIDGLVQRAVSGIVVTEITPEIVNDEVENLIDALL</sequence>
<protein>
    <recommendedName>
        <fullName evidence="1">Probable tRNA sulfurtransferase</fullName>
        <ecNumber evidence="1">2.8.1.4</ecNumber>
    </recommendedName>
    <alternativeName>
        <fullName evidence="1">Sulfur carrier protein ThiS sulfurtransferase</fullName>
    </alternativeName>
    <alternativeName>
        <fullName evidence="1">Thiamine biosynthesis protein ThiI</fullName>
    </alternativeName>
    <alternativeName>
        <fullName evidence="1">tRNA 4-thiouridine synthase</fullName>
    </alternativeName>
</protein>
<keyword id="KW-0067">ATP-binding</keyword>
<keyword id="KW-0963">Cytoplasm</keyword>
<keyword id="KW-0547">Nucleotide-binding</keyword>
<keyword id="KW-0694">RNA-binding</keyword>
<keyword id="KW-0784">Thiamine biosynthesis</keyword>
<keyword id="KW-0808">Transferase</keyword>
<keyword id="KW-0820">tRNA-binding</keyword>
<comment type="function">
    <text evidence="1">Catalyzes the ATP-dependent transfer of a sulfur to tRNA to produce 4-thiouridine in position 8 of tRNAs, which functions as a near-UV photosensor. Also catalyzes the transfer of sulfur to the sulfur carrier protein ThiS, forming ThiS-thiocarboxylate. This is a step in the synthesis of thiazole, in the thiamine biosynthesis pathway. The sulfur is donated as persulfide by IscS.</text>
</comment>
<comment type="catalytic activity">
    <reaction evidence="1">
        <text>[ThiI sulfur-carrier protein]-S-sulfanyl-L-cysteine + a uridine in tRNA + 2 reduced [2Fe-2S]-[ferredoxin] + ATP + H(+) = [ThiI sulfur-carrier protein]-L-cysteine + a 4-thiouridine in tRNA + 2 oxidized [2Fe-2S]-[ferredoxin] + AMP + diphosphate</text>
        <dbReference type="Rhea" id="RHEA:24176"/>
        <dbReference type="Rhea" id="RHEA-COMP:10000"/>
        <dbReference type="Rhea" id="RHEA-COMP:10001"/>
        <dbReference type="Rhea" id="RHEA-COMP:13337"/>
        <dbReference type="Rhea" id="RHEA-COMP:13338"/>
        <dbReference type="Rhea" id="RHEA-COMP:13339"/>
        <dbReference type="Rhea" id="RHEA-COMP:13340"/>
        <dbReference type="ChEBI" id="CHEBI:15378"/>
        <dbReference type="ChEBI" id="CHEBI:29950"/>
        <dbReference type="ChEBI" id="CHEBI:30616"/>
        <dbReference type="ChEBI" id="CHEBI:33019"/>
        <dbReference type="ChEBI" id="CHEBI:33737"/>
        <dbReference type="ChEBI" id="CHEBI:33738"/>
        <dbReference type="ChEBI" id="CHEBI:61963"/>
        <dbReference type="ChEBI" id="CHEBI:65315"/>
        <dbReference type="ChEBI" id="CHEBI:136798"/>
        <dbReference type="ChEBI" id="CHEBI:456215"/>
        <dbReference type="EC" id="2.8.1.4"/>
    </reaction>
</comment>
<comment type="catalytic activity">
    <reaction evidence="1">
        <text>[ThiS sulfur-carrier protein]-C-terminal Gly-Gly-AMP + S-sulfanyl-L-cysteinyl-[cysteine desulfurase] + AH2 = [ThiS sulfur-carrier protein]-C-terminal-Gly-aminoethanethioate + L-cysteinyl-[cysteine desulfurase] + A + AMP + 2 H(+)</text>
        <dbReference type="Rhea" id="RHEA:43340"/>
        <dbReference type="Rhea" id="RHEA-COMP:12157"/>
        <dbReference type="Rhea" id="RHEA-COMP:12158"/>
        <dbReference type="Rhea" id="RHEA-COMP:12910"/>
        <dbReference type="Rhea" id="RHEA-COMP:19908"/>
        <dbReference type="ChEBI" id="CHEBI:13193"/>
        <dbReference type="ChEBI" id="CHEBI:15378"/>
        <dbReference type="ChEBI" id="CHEBI:17499"/>
        <dbReference type="ChEBI" id="CHEBI:29950"/>
        <dbReference type="ChEBI" id="CHEBI:61963"/>
        <dbReference type="ChEBI" id="CHEBI:90618"/>
        <dbReference type="ChEBI" id="CHEBI:232372"/>
        <dbReference type="ChEBI" id="CHEBI:456215"/>
    </reaction>
</comment>
<comment type="pathway">
    <text evidence="1">Cofactor biosynthesis; thiamine diphosphate biosynthesis.</text>
</comment>
<comment type="subcellular location">
    <subcellularLocation>
        <location evidence="1">Cytoplasm</location>
    </subcellularLocation>
</comment>
<comment type="similarity">
    <text evidence="1">Belongs to the ThiI family.</text>
</comment>
<proteinExistence type="inferred from homology"/>
<name>THII_STRPF</name>
<feature type="chain" id="PRO_1000074298" description="Probable tRNA sulfurtransferase">
    <location>
        <begin position="1"/>
        <end position="404"/>
    </location>
</feature>
<feature type="domain" description="THUMP" evidence="1">
    <location>
        <begin position="60"/>
        <end position="165"/>
    </location>
</feature>
<feature type="binding site" evidence="1">
    <location>
        <begin position="183"/>
        <end position="184"/>
    </location>
    <ligand>
        <name>ATP</name>
        <dbReference type="ChEBI" id="CHEBI:30616"/>
    </ligand>
</feature>
<feature type="binding site" evidence="1">
    <location>
        <begin position="208"/>
        <end position="209"/>
    </location>
    <ligand>
        <name>ATP</name>
        <dbReference type="ChEBI" id="CHEBI:30616"/>
    </ligand>
</feature>
<feature type="binding site" evidence="1">
    <location>
        <position position="265"/>
    </location>
    <ligand>
        <name>ATP</name>
        <dbReference type="ChEBI" id="CHEBI:30616"/>
    </ligand>
</feature>
<feature type="binding site" evidence="1">
    <location>
        <position position="287"/>
    </location>
    <ligand>
        <name>ATP</name>
        <dbReference type="ChEBI" id="CHEBI:30616"/>
    </ligand>
</feature>
<feature type="binding site" evidence="1">
    <location>
        <position position="296"/>
    </location>
    <ligand>
        <name>ATP</name>
        <dbReference type="ChEBI" id="CHEBI:30616"/>
    </ligand>
</feature>
<organism>
    <name type="scientific">Streptococcus pyogenes serotype M4 (strain MGAS10750)</name>
    <dbReference type="NCBI Taxonomy" id="370554"/>
    <lineage>
        <taxon>Bacteria</taxon>
        <taxon>Bacillati</taxon>
        <taxon>Bacillota</taxon>
        <taxon>Bacilli</taxon>
        <taxon>Lactobacillales</taxon>
        <taxon>Streptococcaceae</taxon>
        <taxon>Streptococcus</taxon>
    </lineage>
</organism>
<reference key="1">
    <citation type="journal article" date="2006" name="Proc. Natl. Acad. Sci. U.S.A.">
        <title>Molecular genetic anatomy of inter- and intraserotype variation in the human bacterial pathogen group A Streptococcus.</title>
        <authorList>
            <person name="Beres S.B."/>
            <person name="Richter E.W."/>
            <person name="Nagiec M.J."/>
            <person name="Sumby P."/>
            <person name="Porcella S.F."/>
            <person name="DeLeo F.R."/>
            <person name="Musser J.M."/>
        </authorList>
    </citation>
    <scope>NUCLEOTIDE SEQUENCE [LARGE SCALE GENOMIC DNA]</scope>
    <source>
        <strain>MGAS10750</strain>
    </source>
</reference>
<dbReference type="EC" id="2.8.1.4" evidence="1"/>
<dbReference type="EMBL" id="CP000262">
    <property type="protein sequence ID" value="ABF37669.1"/>
    <property type="molecule type" value="Genomic_DNA"/>
</dbReference>
<dbReference type="SMR" id="Q1J7A5"/>
<dbReference type="KEGG" id="spi:MGAS10750_Spy0719"/>
<dbReference type="HOGENOM" id="CLU_037952_4_0_9"/>
<dbReference type="UniPathway" id="UPA00060"/>
<dbReference type="Proteomes" id="UP000002434">
    <property type="component" value="Chromosome"/>
</dbReference>
<dbReference type="GO" id="GO:0005829">
    <property type="term" value="C:cytosol"/>
    <property type="evidence" value="ECO:0007669"/>
    <property type="project" value="TreeGrafter"/>
</dbReference>
<dbReference type="GO" id="GO:0005524">
    <property type="term" value="F:ATP binding"/>
    <property type="evidence" value="ECO:0007669"/>
    <property type="project" value="UniProtKB-UniRule"/>
</dbReference>
<dbReference type="GO" id="GO:0004810">
    <property type="term" value="F:CCA tRNA nucleotidyltransferase activity"/>
    <property type="evidence" value="ECO:0007669"/>
    <property type="project" value="InterPro"/>
</dbReference>
<dbReference type="GO" id="GO:0000049">
    <property type="term" value="F:tRNA binding"/>
    <property type="evidence" value="ECO:0007669"/>
    <property type="project" value="UniProtKB-UniRule"/>
</dbReference>
<dbReference type="GO" id="GO:0140741">
    <property type="term" value="F:tRNA-uracil-4 sulfurtransferase activity"/>
    <property type="evidence" value="ECO:0007669"/>
    <property type="project" value="UniProtKB-EC"/>
</dbReference>
<dbReference type="GO" id="GO:0009228">
    <property type="term" value="P:thiamine biosynthetic process"/>
    <property type="evidence" value="ECO:0007669"/>
    <property type="project" value="UniProtKB-KW"/>
</dbReference>
<dbReference type="GO" id="GO:0009229">
    <property type="term" value="P:thiamine diphosphate biosynthetic process"/>
    <property type="evidence" value="ECO:0007669"/>
    <property type="project" value="UniProtKB-UniRule"/>
</dbReference>
<dbReference type="GO" id="GO:0052837">
    <property type="term" value="P:thiazole biosynthetic process"/>
    <property type="evidence" value="ECO:0007669"/>
    <property type="project" value="TreeGrafter"/>
</dbReference>
<dbReference type="GO" id="GO:0002937">
    <property type="term" value="P:tRNA 4-thiouridine biosynthesis"/>
    <property type="evidence" value="ECO:0007669"/>
    <property type="project" value="TreeGrafter"/>
</dbReference>
<dbReference type="CDD" id="cd01712">
    <property type="entry name" value="PPase_ThiI"/>
    <property type="match status" value="1"/>
</dbReference>
<dbReference type="CDD" id="cd11716">
    <property type="entry name" value="THUMP_ThiI"/>
    <property type="match status" value="1"/>
</dbReference>
<dbReference type="FunFam" id="3.40.50.620:FF:000053">
    <property type="entry name" value="Probable tRNA sulfurtransferase"/>
    <property type="match status" value="1"/>
</dbReference>
<dbReference type="Gene3D" id="3.30.2130.30">
    <property type="match status" value="1"/>
</dbReference>
<dbReference type="Gene3D" id="3.40.50.620">
    <property type="entry name" value="HUPs"/>
    <property type="match status" value="1"/>
</dbReference>
<dbReference type="HAMAP" id="MF_00021">
    <property type="entry name" value="ThiI"/>
    <property type="match status" value="1"/>
</dbReference>
<dbReference type="InterPro" id="IPR014729">
    <property type="entry name" value="Rossmann-like_a/b/a_fold"/>
</dbReference>
<dbReference type="InterPro" id="IPR020536">
    <property type="entry name" value="ThiI_AANH"/>
</dbReference>
<dbReference type="InterPro" id="IPR054173">
    <property type="entry name" value="ThiI_fer"/>
</dbReference>
<dbReference type="InterPro" id="IPR049961">
    <property type="entry name" value="ThiI_N"/>
</dbReference>
<dbReference type="InterPro" id="IPR004114">
    <property type="entry name" value="THUMP_dom"/>
</dbReference>
<dbReference type="InterPro" id="IPR049962">
    <property type="entry name" value="THUMP_ThiI"/>
</dbReference>
<dbReference type="InterPro" id="IPR003720">
    <property type="entry name" value="tRNA_STrfase"/>
</dbReference>
<dbReference type="InterPro" id="IPR050102">
    <property type="entry name" value="tRNA_sulfurtransferase_ThiI"/>
</dbReference>
<dbReference type="NCBIfam" id="TIGR00342">
    <property type="entry name" value="tRNA uracil 4-sulfurtransferase ThiI"/>
    <property type="match status" value="1"/>
</dbReference>
<dbReference type="PANTHER" id="PTHR43209">
    <property type="entry name" value="TRNA SULFURTRANSFERASE"/>
    <property type="match status" value="1"/>
</dbReference>
<dbReference type="PANTHER" id="PTHR43209:SF1">
    <property type="entry name" value="TRNA SULFURTRANSFERASE"/>
    <property type="match status" value="1"/>
</dbReference>
<dbReference type="Pfam" id="PF02568">
    <property type="entry name" value="ThiI"/>
    <property type="match status" value="1"/>
</dbReference>
<dbReference type="Pfam" id="PF22025">
    <property type="entry name" value="ThiI_fer"/>
    <property type="match status" value="1"/>
</dbReference>
<dbReference type="Pfam" id="PF02926">
    <property type="entry name" value="THUMP"/>
    <property type="match status" value="1"/>
</dbReference>
<dbReference type="SMART" id="SM00981">
    <property type="entry name" value="THUMP"/>
    <property type="match status" value="1"/>
</dbReference>
<dbReference type="SUPFAM" id="SSF52402">
    <property type="entry name" value="Adenine nucleotide alpha hydrolases-like"/>
    <property type="match status" value="1"/>
</dbReference>
<dbReference type="SUPFAM" id="SSF143437">
    <property type="entry name" value="THUMP domain-like"/>
    <property type="match status" value="1"/>
</dbReference>
<dbReference type="PROSITE" id="PS51165">
    <property type="entry name" value="THUMP"/>
    <property type="match status" value="1"/>
</dbReference>
<accession>Q1J7A5</accession>